<reference key="1">
    <citation type="journal article" date="2001" name="Proc. Natl. Acad. Sci. U.S.A.">
        <title>Complete genome sequence of Caulobacter crescentus.</title>
        <authorList>
            <person name="Nierman W.C."/>
            <person name="Feldblyum T.V."/>
            <person name="Laub M.T."/>
            <person name="Paulsen I.T."/>
            <person name="Nelson K.E."/>
            <person name="Eisen J.A."/>
            <person name="Heidelberg J.F."/>
            <person name="Alley M.R.K."/>
            <person name="Ohta N."/>
            <person name="Maddock J.R."/>
            <person name="Potocka I."/>
            <person name="Nelson W.C."/>
            <person name="Newton A."/>
            <person name="Stephens C."/>
            <person name="Phadke N.D."/>
            <person name="Ely B."/>
            <person name="DeBoy R.T."/>
            <person name="Dodson R.J."/>
            <person name="Durkin A.S."/>
            <person name="Gwinn M.L."/>
            <person name="Haft D.H."/>
            <person name="Kolonay J.F."/>
            <person name="Smit J."/>
            <person name="Craven M.B."/>
            <person name="Khouri H.M."/>
            <person name="Shetty J."/>
            <person name="Berry K.J."/>
            <person name="Utterback T.R."/>
            <person name="Tran K."/>
            <person name="Wolf A.M."/>
            <person name="Vamathevan J.J."/>
            <person name="Ermolaeva M.D."/>
            <person name="White O."/>
            <person name="Salzberg S.L."/>
            <person name="Venter J.C."/>
            <person name="Shapiro L."/>
            <person name="Fraser C.M."/>
        </authorList>
    </citation>
    <scope>NUCLEOTIDE SEQUENCE [LARGE SCALE GENOMIC DNA]</scope>
    <source>
        <strain>ATCC 19089 / CIP 103742 / CB 15</strain>
    </source>
</reference>
<organism>
    <name type="scientific">Caulobacter vibrioides (strain ATCC 19089 / CIP 103742 / CB 15)</name>
    <name type="common">Caulobacter crescentus</name>
    <dbReference type="NCBI Taxonomy" id="190650"/>
    <lineage>
        <taxon>Bacteria</taxon>
        <taxon>Pseudomonadati</taxon>
        <taxon>Pseudomonadota</taxon>
        <taxon>Alphaproteobacteria</taxon>
        <taxon>Caulobacterales</taxon>
        <taxon>Caulobacteraceae</taxon>
        <taxon>Caulobacter</taxon>
    </lineage>
</organism>
<proteinExistence type="inferred from homology"/>
<protein>
    <recommendedName>
        <fullName evidence="1">UPF0246 protein CC_3385</fullName>
    </recommendedName>
</protein>
<dbReference type="EMBL" id="AE005673">
    <property type="protein sequence ID" value="AAK25347.1"/>
    <property type="molecule type" value="Genomic_DNA"/>
</dbReference>
<dbReference type="PIR" id="G87668">
    <property type="entry name" value="G87668"/>
</dbReference>
<dbReference type="RefSeq" id="NP_422179.1">
    <property type="nucleotide sequence ID" value="NC_002696.2"/>
</dbReference>
<dbReference type="RefSeq" id="WP_010921214.1">
    <property type="nucleotide sequence ID" value="NC_002696.2"/>
</dbReference>
<dbReference type="SMR" id="Q9A321"/>
<dbReference type="STRING" id="190650.CC_3385"/>
<dbReference type="EnsemblBacteria" id="AAK25347">
    <property type="protein sequence ID" value="AAK25347"/>
    <property type="gene ID" value="CC_3385"/>
</dbReference>
<dbReference type="KEGG" id="ccr:CC_3385"/>
<dbReference type="PATRIC" id="fig|190650.5.peg.3392"/>
<dbReference type="eggNOG" id="COG3022">
    <property type="taxonomic scope" value="Bacteria"/>
</dbReference>
<dbReference type="HOGENOM" id="CLU_061989_0_0_5"/>
<dbReference type="BioCyc" id="CAULO:CC3385-MONOMER"/>
<dbReference type="Proteomes" id="UP000001816">
    <property type="component" value="Chromosome"/>
</dbReference>
<dbReference type="GO" id="GO:0005829">
    <property type="term" value="C:cytosol"/>
    <property type="evidence" value="ECO:0007669"/>
    <property type="project" value="TreeGrafter"/>
</dbReference>
<dbReference type="GO" id="GO:0033194">
    <property type="term" value="P:response to hydroperoxide"/>
    <property type="evidence" value="ECO:0007669"/>
    <property type="project" value="TreeGrafter"/>
</dbReference>
<dbReference type="HAMAP" id="MF_00652">
    <property type="entry name" value="UPF0246"/>
    <property type="match status" value="1"/>
</dbReference>
<dbReference type="InterPro" id="IPR005583">
    <property type="entry name" value="YaaA"/>
</dbReference>
<dbReference type="NCBIfam" id="NF002542">
    <property type="entry name" value="PRK02101.1-3"/>
    <property type="match status" value="1"/>
</dbReference>
<dbReference type="PANTHER" id="PTHR30283:SF4">
    <property type="entry name" value="PEROXIDE STRESS RESISTANCE PROTEIN YAAA"/>
    <property type="match status" value="1"/>
</dbReference>
<dbReference type="PANTHER" id="PTHR30283">
    <property type="entry name" value="PEROXIDE STRESS RESPONSE PROTEIN YAAA"/>
    <property type="match status" value="1"/>
</dbReference>
<dbReference type="Pfam" id="PF03883">
    <property type="entry name" value="H2O2_YaaD"/>
    <property type="match status" value="1"/>
</dbReference>
<sequence length="255" mass="28466">MLMVISPAKSLDFTAPQTVLPLTTPELKAQIAELSKVTRKLTAADLKRLMHISDALATLNRERFQAFDPEVEEGLQAVIAFNGDVYAGLNARELDRPALEWAQDHLRILSGLYGVLRPFDALQPYRLEMGTRLKTKKGANLYDFWGETISRTLNQAAEGHADPTLVNLASQEYFGAVDAKALKLPVVTCHFKEEKGGELRVLGFFAKKARGRMARYIIDNRIDQAEALKGFDLDGYRFQPGLSTSADWVFARPQP</sequence>
<keyword id="KW-1185">Reference proteome</keyword>
<feature type="chain" id="PRO_0000203978" description="UPF0246 protein CC_3385">
    <location>
        <begin position="1"/>
        <end position="255"/>
    </location>
</feature>
<comment type="similarity">
    <text evidence="1">Belongs to the UPF0246 family.</text>
</comment>
<name>Y3385_CAUVC</name>
<accession>Q9A321</accession>
<evidence type="ECO:0000255" key="1">
    <source>
        <dbReference type="HAMAP-Rule" id="MF_00652"/>
    </source>
</evidence>
<gene>
    <name type="ordered locus">CC_3385</name>
</gene>